<comment type="function">
    <text evidence="1">Binds to the 23S rRNA.</text>
</comment>
<comment type="subunit">
    <text evidence="1">Part of the 50S ribosomal subunit.</text>
</comment>
<comment type="similarity">
    <text evidence="1">Belongs to the universal ribosomal protein uL15 family.</text>
</comment>
<feature type="chain" id="PRO_1000054453" description="Large ribosomal subunit protein uL15">
    <location>
        <begin position="1"/>
        <end position="146"/>
    </location>
</feature>
<feature type="region of interest" description="Disordered" evidence="2">
    <location>
        <begin position="1"/>
        <end position="54"/>
    </location>
</feature>
<feature type="compositionally biased region" description="Gly residues" evidence="2">
    <location>
        <begin position="21"/>
        <end position="31"/>
    </location>
</feature>
<feature type="compositionally biased region" description="Gly residues" evidence="2">
    <location>
        <begin position="42"/>
        <end position="52"/>
    </location>
</feature>
<proteinExistence type="inferred from homology"/>
<gene>
    <name evidence="1" type="primary">rplO</name>
    <name type="ordered locus">CPF_2695</name>
</gene>
<reference key="1">
    <citation type="journal article" date="2006" name="Genome Res.">
        <title>Skewed genomic variability in strains of the toxigenic bacterial pathogen, Clostridium perfringens.</title>
        <authorList>
            <person name="Myers G.S.A."/>
            <person name="Rasko D.A."/>
            <person name="Cheung J.K."/>
            <person name="Ravel J."/>
            <person name="Seshadri R."/>
            <person name="DeBoy R.T."/>
            <person name="Ren Q."/>
            <person name="Varga J."/>
            <person name="Awad M.M."/>
            <person name="Brinkac L.M."/>
            <person name="Daugherty S.C."/>
            <person name="Haft D.H."/>
            <person name="Dodson R.J."/>
            <person name="Madupu R."/>
            <person name="Nelson W.C."/>
            <person name="Rosovitz M.J."/>
            <person name="Sullivan S.A."/>
            <person name="Khouri H."/>
            <person name="Dimitrov G.I."/>
            <person name="Watkins K.L."/>
            <person name="Mulligan S."/>
            <person name="Benton J."/>
            <person name="Radune D."/>
            <person name="Fisher D.J."/>
            <person name="Atkins H.S."/>
            <person name="Hiscox T."/>
            <person name="Jost B.H."/>
            <person name="Billington S.J."/>
            <person name="Songer J.G."/>
            <person name="McClane B.A."/>
            <person name="Titball R.W."/>
            <person name="Rood J.I."/>
            <person name="Melville S.B."/>
            <person name="Paulsen I.T."/>
        </authorList>
    </citation>
    <scope>NUCLEOTIDE SEQUENCE [LARGE SCALE GENOMIC DNA]</scope>
    <source>
        <strain>ATCC 13124 / DSM 756 / JCM 1290 / NCIMB 6125 / NCTC 8237 / S 107 / Type A</strain>
    </source>
</reference>
<organism>
    <name type="scientific">Clostridium perfringens (strain ATCC 13124 / DSM 756 / JCM 1290 / NCIMB 6125 / NCTC 8237 / Type A)</name>
    <dbReference type="NCBI Taxonomy" id="195103"/>
    <lineage>
        <taxon>Bacteria</taxon>
        <taxon>Bacillati</taxon>
        <taxon>Bacillota</taxon>
        <taxon>Clostridia</taxon>
        <taxon>Eubacteriales</taxon>
        <taxon>Clostridiaceae</taxon>
        <taxon>Clostridium</taxon>
    </lineage>
</organism>
<accession>Q0TMR5</accession>
<evidence type="ECO:0000255" key="1">
    <source>
        <dbReference type="HAMAP-Rule" id="MF_01341"/>
    </source>
</evidence>
<evidence type="ECO:0000256" key="2">
    <source>
        <dbReference type="SAM" id="MobiDB-lite"/>
    </source>
</evidence>
<evidence type="ECO:0000305" key="3"/>
<protein>
    <recommendedName>
        <fullName evidence="1">Large ribosomal subunit protein uL15</fullName>
    </recommendedName>
    <alternativeName>
        <fullName evidence="3">50S ribosomal protein L15</fullName>
    </alternativeName>
</protein>
<name>RL15_CLOP1</name>
<dbReference type="EMBL" id="CP000246">
    <property type="protein sequence ID" value="ABG82763.1"/>
    <property type="molecule type" value="Genomic_DNA"/>
</dbReference>
<dbReference type="RefSeq" id="WP_003454379.1">
    <property type="nucleotide sequence ID" value="NC_008261.1"/>
</dbReference>
<dbReference type="SMR" id="Q0TMR5"/>
<dbReference type="STRING" id="195103.CPF_2695"/>
<dbReference type="PaxDb" id="195103-CPF_2695"/>
<dbReference type="GeneID" id="93001028"/>
<dbReference type="KEGG" id="cpf:CPF_2695"/>
<dbReference type="eggNOG" id="COG0200">
    <property type="taxonomic scope" value="Bacteria"/>
</dbReference>
<dbReference type="HOGENOM" id="CLU_055188_4_2_9"/>
<dbReference type="Proteomes" id="UP000001823">
    <property type="component" value="Chromosome"/>
</dbReference>
<dbReference type="GO" id="GO:0022625">
    <property type="term" value="C:cytosolic large ribosomal subunit"/>
    <property type="evidence" value="ECO:0007669"/>
    <property type="project" value="TreeGrafter"/>
</dbReference>
<dbReference type="GO" id="GO:0019843">
    <property type="term" value="F:rRNA binding"/>
    <property type="evidence" value="ECO:0007669"/>
    <property type="project" value="UniProtKB-UniRule"/>
</dbReference>
<dbReference type="GO" id="GO:0003735">
    <property type="term" value="F:structural constituent of ribosome"/>
    <property type="evidence" value="ECO:0007669"/>
    <property type="project" value="InterPro"/>
</dbReference>
<dbReference type="GO" id="GO:0006412">
    <property type="term" value="P:translation"/>
    <property type="evidence" value="ECO:0007669"/>
    <property type="project" value="UniProtKB-UniRule"/>
</dbReference>
<dbReference type="Gene3D" id="3.100.10.10">
    <property type="match status" value="1"/>
</dbReference>
<dbReference type="HAMAP" id="MF_01341">
    <property type="entry name" value="Ribosomal_uL15"/>
    <property type="match status" value="1"/>
</dbReference>
<dbReference type="InterPro" id="IPR030878">
    <property type="entry name" value="Ribosomal_uL15"/>
</dbReference>
<dbReference type="InterPro" id="IPR021131">
    <property type="entry name" value="Ribosomal_uL15/eL18"/>
</dbReference>
<dbReference type="InterPro" id="IPR036227">
    <property type="entry name" value="Ribosomal_uL15/eL18_sf"/>
</dbReference>
<dbReference type="InterPro" id="IPR005749">
    <property type="entry name" value="Ribosomal_uL15_bac-type"/>
</dbReference>
<dbReference type="InterPro" id="IPR001196">
    <property type="entry name" value="Ribosomal_uL15_CS"/>
</dbReference>
<dbReference type="NCBIfam" id="TIGR01071">
    <property type="entry name" value="rplO_bact"/>
    <property type="match status" value="1"/>
</dbReference>
<dbReference type="PANTHER" id="PTHR12934">
    <property type="entry name" value="50S RIBOSOMAL PROTEIN L15"/>
    <property type="match status" value="1"/>
</dbReference>
<dbReference type="PANTHER" id="PTHR12934:SF11">
    <property type="entry name" value="LARGE RIBOSOMAL SUBUNIT PROTEIN UL15M"/>
    <property type="match status" value="1"/>
</dbReference>
<dbReference type="Pfam" id="PF00828">
    <property type="entry name" value="Ribosomal_L27A"/>
    <property type="match status" value="1"/>
</dbReference>
<dbReference type="SUPFAM" id="SSF52080">
    <property type="entry name" value="Ribosomal proteins L15p and L18e"/>
    <property type="match status" value="1"/>
</dbReference>
<dbReference type="PROSITE" id="PS00475">
    <property type="entry name" value="RIBOSOMAL_L15"/>
    <property type="match status" value="1"/>
</dbReference>
<sequence>MKLHELRPAAGSKSAPKRVGRGTGSGLGRNAGKGEKGQNARSGGGVRPGFEGGQMPLYRRLPKRGFTNPFTKHFVTINVDRLNIFDNGTEVTPELLLERRVVSKLMDGVKILGNGNIEKSLTIAGCKLSKQAAEKIVAAGGKVEVK</sequence>
<keyword id="KW-0687">Ribonucleoprotein</keyword>
<keyword id="KW-0689">Ribosomal protein</keyword>
<keyword id="KW-0694">RNA-binding</keyword>
<keyword id="KW-0699">rRNA-binding</keyword>